<name>RK31_PORPU</name>
<protein>
    <recommendedName>
        <fullName evidence="1">Large ribosomal subunit protein bL31c</fullName>
    </recommendedName>
    <alternativeName>
        <fullName evidence="2">50S ribosomal protein L31, chloroplastic</fullName>
    </alternativeName>
</protein>
<proteinExistence type="inferred from homology"/>
<organism>
    <name type="scientific">Porphyra purpurea</name>
    <name type="common">Red seaweed</name>
    <name type="synonym">Ulva purpurea</name>
    <dbReference type="NCBI Taxonomy" id="2787"/>
    <lineage>
        <taxon>Eukaryota</taxon>
        <taxon>Rhodophyta</taxon>
        <taxon>Bangiophyceae</taxon>
        <taxon>Bangiales</taxon>
        <taxon>Bangiaceae</taxon>
        <taxon>Porphyra</taxon>
    </lineage>
</organism>
<gene>
    <name evidence="1" type="primary">rpl31</name>
</gene>
<geneLocation type="chloroplast"/>
<feature type="chain" id="PRO_0000173192" description="Large ribosomal subunit protein bL31c">
    <location>
        <begin position="1"/>
        <end position="70"/>
    </location>
</feature>
<accession>P51290</accession>
<keyword id="KW-0150">Chloroplast</keyword>
<keyword id="KW-0934">Plastid</keyword>
<keyword id="KW-0687">Ribonucleoprotein</keyword>
<keyword id="KW-0689">Ribosomal protein</keyword>
<keyword id="KW-0694">RNA-binding</keyword>
<keyword id="KW-0699">rRNA-binding</keyword>
<reference key="1">
    <citation type="journal article" date="1995" name="Plant Mol. Biol. Rep.">
        <title>Complete nucleotide sequence of the Porphyra purpurea chloroplast genome.</title>
        <authorList>
            <person name="Reith M.E."/>
            <person name="Munholland J."/>
        </authorList>
    </citation>
    <scope>NUCLEOTIDE SEQUENCE [LARGE SCALE GENOMIC DNA]</scope>
    <source>
        <strain>Avonport</strain>
    </source>
</reference>
<evidence type="ECO:0000255" key="1">
    <source>
        <dbReference type="HAMAP-Rule" id="MF_00501"/>
    </source>
</evidence>
<evidence type="ECO:0000305" key="2"/>
<comment type="function">
    <text evidence="1">Binds the 23S rRNA.</text>
</comment>
<comment type="subunit">
    <text evidence="1">Part of the 50S ribosomal subunit.</text>
</comment>
<comment type="subcellular location">
    <subcellularLocation>
        <location>Plastid</location>
        <location>Chloroplast</location>
    </subcellularLocation>
</comment>
<comment type="similarity">
    <text evidence="1">Belongs to the bacterial ribosomal protein bL31 family. Type A subfamily.</text>
</comment>
<sequence>MAKVDIHPIWYPDAKVYCDGQLIMTIGSTKPELHVDIWSGNHPFFTGSQRIIDTEGRVERFMRKYKMEKD</sequence>
<dbReference type="EMBL" id="U38804">
    <property type="protein sequence ID" value="AAC08176.1"/>
    <property type="molecule type" value="Genomic_DNA"/>
</dbReference>
<dbReference type="PIR" id="S73211">
    <property type="entry name" value="S73211"/>
</dbReference>
<dbReference type="RefSeq" id="NP_053900.1">
    <property type="nucleotide sequence ID" value="NC_000925.1"/>
</dbReference>
<dbReference type="GeneID" id="809919"/>
<dbReference type="GO" id="GO:0009507">
    <property type="term" value="C:chloroplast"/>
    <property type="evidence" value="ECO:0007669"/>
    <property type="project" value="UniProtKB-SubCell"/>
</dbReference>
<dbReference type="GO" id="GO:1990904">
    <property type="term" value="C:ribonucleoprotein complex"/>
    <property type="evidence" value="ECO:0007669"/>
    <property type="project" value="UniProtKB-KW"/>
</dbReference>
<dbReference type="GO" id="GO:0005840">
    <property type="term" value="C:ribosome"/>
    <property type="evidence" value="ECO:0007669"/>
    <property type="project" value="UniProtKB-KW"/>
</dbReference>
<dbReference type="GO" id="GO:0019843">
    <property type="term" value="F:rRNA binding"/>
    <property type="evidence" value="ECO:0007669"/>
    <property type="project" value="UniProtKB-KW"/>
</dbReference>
<dbReference type="GO" id="GO:0003735">
    <property type="term" value="F:structural constituent of ribosome"/>
    <property type="evidence" value="ECO:0007669"/>
    <property type="project" value="InterPro"/>
</dbReference>
<dbReference type="GO" id="GO:0006412">
    <property type="term" value="P:translation"/>
    <property type="evidence" value="ECO:0007669"/>
    <property type="project" value="UniProtKB-UniRule"/>
</dbReference>
<dbReference type="Gene3D" id="4.10.830.30">
    <property type="entry name" value="Ribosomal protein L31"/>
    <property type="match status" value="1"/>
</dbReference>
<dbReference type="HAMAP" id="MF_00501">
    <property type="entry name" value="Ribosomal_bL31_1"/>
    <property type="match status" value="1"/>
</dbReference>
<dbReference type="InterPro" id="IPR034704">
    <property type="entry name" value="Ribosomal_bL28/bL31-like_sf"/>
</dbReference>
<dbReference type="InterPro" id="IPR002150">
    <property type="entry name" value="Ribosomal_bL31"/>
</dbReference>
<dbReference type="InterPro" id="IPR027491">
    <property type="entry name" value="Ribosomal_bL31_A"/>
</dbReference>
<dbReference type="InterPro" id="IPR042105">
    <property type="entry name" value="Ribosomal_bL31_sf"/>
</dbReference>
<dbReference type="NCBIfam" id="TIGR00105">
    <property type="entry name" value="L31"/>
    <property type="match status" value="1"/>
</dbReference>
<dbReference type="NCBIfam" id="NF001809">
    <property type="entry name" value="PRK00528.1"/>
    <property type="match status" value="1"/>
</dbReference>
<dbReference type="PANTHER" id="PTHR33280">
    <property type="entry name" value="50S RIBOSOMAL PROTEIN L31, CHLOROPLASTIC"/>
    <property type="match status" value="1"/>
</dbReference>
<dbReference type="PANTHER" id="PTHR33280:SF1">
    <property type="entry name" value="LARGE RIBOSOMAL SUBUNIT PROTEIN BL31C"/>
    <property type="match status" value="1"/>
</dbReference>
<dbReference type="Pfam" id="PF01197">
    <property type="entry name" value="Ribosomal_L31"/>
    <property type="match status" value="1"/>
</dbReference>
<dbReference type="PRINTS" id="PR01249">
    <property type="entry name" value="RIBOSOMALL31"/>
</dbReference>
<dbReference type="SUPFAM" id="SSF143800">
    <property type="entry name" value="L28p-like"/>
    <property type="match status" value="1"/>
</dbReference>
<dbReference type="PROSITE" id="PS01143">
    <property type="entry name" value="RIBOSOMAL_L31"/>
    <property type="match status" value="1"/>
</dbReference>